<name>CCME_ECOK1</name>
<protein>
    <recommendedName>
        <fullName evidence="1">Cytochrome c-type biogenesis protein CcmE</fullName>
    </recommendedName>
    <alternativeName>
        <fullName evidence="1">Cytochrome c maturation protein E</fullName>
    </alternativeName>
    <alternativeName>
        <fullName evidence="1">Heme chaperone CcmE</fullName>
    </alternativeName>
</protein>
<reference key="1">
    <citation type="journal article" date="2007" name="J. Bacteriol.">
        <title>The genome sequence of avian pathogenic Escherichia coli strain O1:K1:H7 shares strong similarities with human extraintestinal pathogenic E. coli genomes.</title>
        <authorList>
            <person name="Johnson T.J."/>
            <person name="Kariyawasam S."/>
            <person name="Wannemuehler Y."/>
            <person name="Mangiamele P."/>
            <person name="Johnson S.J."/>
            <person name="Doetkott C."/>
            <person name="Skyberg J.A."/>
            <person name="Lynne A.M."/>
            <person name="Johnson J.R."/>
            <person name="Nolan L.K."/>
        </authorList>
    </citation>
    <scope>NUCLEOTIDE SEQUENCE [LARGE SCALE GENOMIC DNA]</scope>
</reference>
<sequence length="159" mass="17698">MNIRRKNRLWIACAVLAGLALTIGLVLYALRSNIDLFYTPGEILYGKRETQQMPEVGQRLRVGGMVMPGSVQRDPNSLKVTFTIYDAEGSVDVSYEGILPDLFREGQGVVVQGELEKGNHILAKEVLAKHDENYTPPEVEKAMEANHRRPASVYKDPAS</sequence>
<keyword id="KW-0997">Cell inner membrane</keyword>
<keyword id="KW-1003">Cell membrane</keyword>
<keyword id="KW-0201">Cytochrome c-type biogenesis</keyword>
<keyword id="KW-0349">Heme</keyword>
<keyword id="KW-0408">Iron</keyword>
<keyword id="KW-0472">Membrane</keyword>
<keyword id="KW-0479">Metal-binding</keyword>
<keyword id="KW-1185">Reference proteome</keyword>
<keyword id="KW-0735">Signal-anchor</keyword>
<keyword id="KW-0812">Transmembrane</keyword>
<keyword id="KW-1133">Transmembrane helix</keyword>
<proteinExistence type="inferred from homology"/>
<evidence type="ECO:0000255" key="1">
    <source>
        <dbReference type="HAMAP-Rule" id="MF_01959"/>
    </source>
</evidence>
<evidence type="ECO:0000256" key="2">
    <source>
        <dbReference type="SAM" id="MobiDB-lite"/>
    </source>
</evidence>
<comment type="function">
    <text evidence="1">Heme chaperone required for the biogenesis of c-type cytochromes. Transiently binds heme delivered by CcmC and transfers the heme to apo-cytochromes in a process facilitated by CcmF and CcmH.</text>
</comment>
<comment type="subcellular location">
    <subcellularLocation>
        <location evidence="1">Cell inner membrane</location>
        <topology evidence="1">Single-pass type II membrane protein</topology>
        <orientation evidence="1">Periplasmic side</orientation>
    </subcellularLocation>
</comment>
<comment type="similarity">
    <text evidence="1">Belongs to the CcmE/CycJ family.</text>
</comment>
<feature type="chain" id="PRO_1000070811" description="Cytochrome c-type biogenesis protein CcmE">
    <location>
        <begin position="1"/>
        <end position="159"/>
    </location>
</feature>
<feature type="topological domain" description="Cytoplasmic" evidence="1">
    <location>
        <begin position="1"/>
        <end position="8"/>
    </location>
</feature>
<feature type="transmembrane region" description="Helical; Signal-anchor for type II membrane protein" evidence="1">
    <location>
        <begin position="9"/>
        <end position="29"/>
    </location>
</feature>
<feature type="topological domain" description="Periplasmic" evidence="1">
    <location>
        <begin position="30"/>
        <end position="159"/>
    </location>
</feature>
<feature type="region of interest" description="Disordered" evidence="2">
    <location>
        <begin position="132"/>
        <end position="159"/>
    </location>
</feature>
<feature type="compositionally biased region" description="Basic and acidic residues" evidence="2">
    <location>
        <begin position="132"/>
        <end position="147"/>
    </location>
</feature>
<feature type="binding site" description="covalent" evidence="1">
    <location>
        <position position="130"/>
    </location>
    <ligand>
        <name>heme</name>
        <dbReference type="ChEBI" id="CHEBI:30413"/>
    </ligand>
</feature>
<feature type="binding site" description="axial binding residue" evidence="1">
    <location>
        <position position="134"/>
    </location>
    <ligand>
        <name>heme</name>
        <dbReference type="ChEBI" id="CHEBI:30413"/>
    </ligand>
    <ligandPart>
        <name>Fe</name>
        <dbReference type="ChEBI" id="CHEBI:18248"/>
    </ligandPart>
</feature>
<accession>A1AD51</accession>
<organism>
    <name type="scientific">Escherichia coli O1:K1 / APEC</name>
    <dbReference type="NCBI Taxonomy" id="405955"/>
    <lineage>
        <taxon>Bacteria</taxon>
        <taxon>Pseudomonadati</taxon>
        <taxon>Pseudomonadota</taxon>
        <taxon>Gammaproteobacteria</taxon>
        <taxon>Enterobacterales</taxon>
        <taxon>Enterobacteriaceae</taxon>
        <taxon>Escherichia</taxon>
    </lineage>
</organism>
<dbReference type="EMBL" id="CP000468">
    <property type="protein sequence ID" value="ABJ01591.1"/>
    <property type="molecule type" value="Genomic_DNA"/>
</dbReference>
<dbReference type="RefSeq" id="WP_001026418.1">
    <property type="nucleotide sequence ID" value="NZ_CADILS010000004.1"/>
</dbReference>
<dbReference type="BMRB" id="A1AD51"/>
<dbReference type="SMR" id="A1AD51"/>
<dbReference type="GeneID" id="86860369"/>
<dbReference type="KEGG" id="ecv:APECO1_4361"/>
<dbReference type="HOGENOM" id="CLU_079503_1_0_6"/>
<dbReference type="Proteomes" id="UP000008216">
    <property type="component" value="Chromosome"/>
</dbReference>
<dbReference type="GO" id="GO:0005886">
    <property type="term" value="C:plasma membrane"/>
    <property type="evidence" value="ECO:0007669"/>
    <property type="project" value="UniProtKB-SubCell"/>
</dbReference>
<dbReference type="GO" id="GO:0020037">
    <property type="term" value="F:heme binding"/>
    <property type="evidence" value="ECO:0007669"/>
    <property type="project" value="InterPro"/>
</dbReference>
<dbReference type="GO" id="GO:0046872">
    <property type="term" value="F:metal ion binding"/>
    <property type="evidence" value="ECO:0007669"/>
    <property type="project" value="UniProtKB-KW"/>
</dbReference>
<dbReference type="GO" id="GO:0017004">
    <property type="term" value="P:cytochrome complex assembly"/>
    <property type="evidence" value="ECO:0007669"/>
    <property type="project" value="UniProtKB-KW"/>
</dbReference>
<dbReference type="FunFam" id="2.40.50.140:FF:000104">
    <property type="entry name" value="Cytochrome c-type biogenesis protein CcmE"/>
    <property type="match status" value="1"/>
</dbReference>
<dbReference type="Gene3D" id="2.40.50.140">
    <property type="entry name" value="Nucleic acid-binding proteins"/>
    <property type="match status" value="1"/>
</dbReference>
<dbReference type="HAMAP" id="MF_01959">
    <property type="entry name" value="CcmE"/>
    <property type="match status" value="1"/>
</dbReference>
<dbReference type="InterPro" id="IPR004329">
    <property type="entry name" value="CcmE"/>
</dbReference>
<dbReference type="InterPro" id="IPR036127">
    <property type="entry name" value="CcmE-like_sf"/>
</dbReference>
<dbReference type="InterPro" id="IPR012340">
    <property type="entry name" value="NA-bd_OB-fold"/>
</dbReference>
<dbReference type="NCBIfam" id="NF009635">
    <property type="entry name" value="PRK13150.1"/>
    <property type="match status" value="1"/>
</dbReference>
<dbReference type="NCBIfam" id="NF009638">
    <property type="entry name" value="PRK13165.1"/>
    <property type="match status" value="1"/>
</dbReference>
<dbReference type="NCBIfam" id="NF009727">
    <property type="entry name" value="PRK13254.1-1"/>
    <property type="match status" value="1"/>
</dbReference>
<dbReference type="NCBIfam" id="NF009729">
    <property type="entry name" value="PRK13254.1-3"/>
    <property type="match status" value="1"/>
</dbReference>
<dbReference type="PANTHER" id="PTHR34128">
    <property type="entry name" value="CYTOCHROME C-TYPE BIOGENESIS PROTEIN CCME HOMOLOG, MITOCHONDRIAL"/>
    <property type="match status" value="1"/>
</dbReference>
<dbReference type="PANTHER" id="PTHR34128:SF2">
    <property type="entry name" value="CYTOCHROME C-TYPE BIOGENESIS PROTEIN CCME HOMOLOG, MITOCHONDRIAL"/>
    <property type="match status" value="1"/>
</dbReference>
<dbReference type="Pfam" id="PF03100">
    <property type="entry name" value="CcmE"/>
    <property type="match status" value="1"/>
</dbReference>
<dbReference type="SUPFAM" id="SSF82093">
    <property type="entry name" value="Heme chaperone CcmE"/>
    <property type="match status" value="1"/>
</dbReference>
<gene>
    <name evidence="1" type="primary">ccmE</name>
    <name evidence="1" type="synonym">cycJ</name>
    <name type="ordered locus">Ecok1_20970</name>
    <name type="ORF">APECO1_4361</name>
</gene>